<name>RS4_CHLMU</name>
<dbReference type="EMBL" id="AE002160">
    <property type="protein sequence ID" value="AAF39707.1"/>
    <property type="molecule type" value="Genomic_DNA"/>
</dbReference>
<dbReference type="PIR" id="C81650">
    <property type="entry name" value="C81650"/>
</dbReference>
<dbReference type="RefSeq" id="WP_010231932.1">
    <property type="nucleotide sequence ID" value="NZ_CP063055.1"/>
</dbReference>
<dbReference type="SMR" id="Q9PJB7"/>
<dbReference type="GeneID" id="1246284"/>
<dbReference type="KEGG" id="cmu:TC_0915"/>
<dbReference type="eggNOG" id="COG0522">
    <property type="taxonomic scope" value="Bacteria"/>
</dbReference>
<dbReference type="HOGENOM" id="CLU_092403_0_1_0"/>
<dbReference type="OrthoDB" id="9803672at2"/>
<dbReference type="Proteomes" id="UP000000800">
    <property type="component" value="Chromosome"/>
</dbReference>
<dbReference type="GO" id="GO:0015935">
    <property type="term" value="C:small ribosomal subunit"/>
    <property type="evidence" value="ECO:0007669"/>
    <property type="project" value="InterPro"/>
</dbReference>
<dbReference type="GO" id="GO:0019843">
    <property type="term" value="F:rRNA binding"/>
    <property type="evidence" value="ECO:0007669"/>
    <property type="project" value="UniProtKB-UniRule"/>
</dbReference>
<dbReference type="GO" id="GO:0003735">
    <property type="term" value="F:structural constituent of ribosome"/>
    <property type="evidence" value="ECO:0007669"/>
    <property type="project" value="InterPro"/>
</dbReference>
<dbReference type="GO" id="GO:0042274">
    <property type="term" value="P:ribosomal small subunit biogenesis"/>
    <property type="evidence" value="ECO:0007669"/>
    <property type="project" value="TreeGrafter"/>
</dbReference>
<dbReference type="GO" id="GO:0006412">
    <property type="term" value="P:translation"/>
    <property type="evidence" value="ECO:0007669"/>
    <property type="project" value="UniProtKB-UniRule"/>
</dbReference>
<dbReference type="CDD" id="cd00165">
    <property type="entry name" value="S4"/>
    <property type="match status" value="1"/>
</dbReference>
<dbReference type="FunFam" id="3.10.290.10:FF:000001">
    <property type="entry name" value="30S ribosomal protein S4"/>
    <property type="match status" value="1"/>
</dbReference>
<dbReference type="Gene3D" id="1.10.1050.10">
    <property type="entry name" value="Ribosomal Protein S4 Delta 41, Chain A, domain 1"/>
    <property type="match status" value="1"/>
</dbReference>
<dbReference type="Gene3D" id="3.10.290.10">
    <property type="entry name" value="RNA-binding S4 domain"/>
    <property type="match status" value="1"/>
</dbReference>
<dbReference type="HAMAP" id="MF_01306_B">
    <property type="entry name" value="Ribosomal_uS4_B"/>
    <property type="match status" value="1"/>
</dbReference>
<dbReference type="InterPro" id="IPR022801">
    <property type="entry name" value="Ribosomal_uS4"/>
</dbReference>
<dbReference type="InterPro" id="IPR005709">
    <property type="entry name" value="Ribosomal_uS4_bac-type"/>
</dbReference>
<dbReference type="InterPro" id="IPR001912">
    <property type="entry name" value="Ribosomal_uS4_N"/>
</dbReference>
<dbReference type="InterPro" id="IPR002942">
    <property type="entry name" value="S4_RNA-bd"/>
</dbReference>
<dbReference type="InterPro" id="IPR036986">
    <property type="entry name" value="S4_RNA-bd_sf"/>
</dbReference>
<dbReference type="NCBIfam" id="NF003717">
    <property type="entry name" value="PRK05327.1"/>
    <property type="match status" value="1"/>
</dbReference>
<dbReference type="NCBIfam" id="TIGR01017">
    <property type="entry name" value="rpsD_bact"/>
    <property type="match status" value="1"/>
</dbReference>
<dbReference type="PANTHER" id="PTHR11831">
    <property type="entry name" value="30S 40S RIBOSOMAL PROTEIN"/>
    <property type="match status" value="1"/>
</dbReference>
<dbReference type="PANTHER" id="PTHR11831:SF4">
    <property type="entry name" value="SMALL RIBOSOMAL SUBUNIT PROTEIN US4M"/>
    <property type="match status" value="1"/>
</dbReference>
<dbReference type="Pfam" id="PF00163">
    <property type="entry name" value="Ribosomal_S4"/>
    <property type="match status" value="1"/>
</dbReference>
<dbReference type="Pfam" id="PF01479">
    <property type="entry name" value="S4"/>
    <property type="match status" value="1"/>
</dbReference>
<dbReference type="SMART" id="SM01390">
    <property type="entry name" value="Ribosomal_S4"/>
    <property type="match status" value="1"/>
</dbReference>
<dbReference type="SMART" id="SM00363">
    <property type="entry name" value="S4"/>
    <property type="match status" value="1"/>
</dbReference>
<dbReference type="SUPFAM" id="SSF55174">
    <property type="entry name" value="Alpha-L RNA-binding motif"/>
    <property type="match status" value="1"/>
</dbReference>
<dbReference type="PROSITE" id="PS50889">
    <property type="entry name" value="S4"/>
    <property type="match status" value="1"/>
</dbReference>
<evidence type="ECO:0000255" key="1">
    <source>
        <dbReference type="HAMAP-Rule" id="MF_01306"/>
    </source>
</evidence>
<evidence type="ECO:0000256" key="2">
    <source>
        <dbReference type="SAM" id="MobiDB-lite"/>
    </source>
</evidence>
<evidence type="ECO:0000305" key="3"/>
<protein>
    <recommendedName>
        <fullName evidence="1">Small ribosomal subunit protein uS4</fullName>
    </recommendedName>
    <alternativeName>
        <fullName evidence="3">30S ribosomal protein S4</fullName>
    </alternativeName>
</protein>
<organism>
    <name type="scientific">Chlamydia muridarum (strain MoPn / Nigg)</name>
    <dbReference type="NCBI Taxonomy" id="243161"/>
    <lineage>
        <taxon>Bacteria</taxon>
        <taxon>Pseudomonadati</taxon>
        <taxon>Chlamydiota</taxon>
        <taxon>Chlamydiia</taxon>
        <taxon>Chlamydiales</taxon>
        <taxon>Chlamydiaceae</taxon>
        <taxon>Chlamydia/Chlamydophila group</taxon>
        <taxon>Chlamydia</taxon>
    </lineage>
</organism>
<reference key="1">
    <citation type="journal article" date="2000" name="Nucleic Acids Res.">
        <title>Genome sequences of Chlamydia trachomatis MoPn and Chlamydia pneumoniae AR39.</title>
        <authorList>
            <person name="Read T.D."/>
            <person name="Brunham R.C."/>
            <person name="Shen C."/>
            <person name="Gill S.R."/>
            <person name="Heidelberg J.F."/>
            <person name="White O."/>
            <person name="Hickey E.K."/>
            <person name="Peterson J.D."/>
            <person name="Utterback T.R."/>
            <person name="Berry K.J."/>
            <person name="Bass S."/>
            <person name="Linher K.D."/>
            <person name="Weidman J.F."/>
            <person name="Khouri H.M."/>
            <person name="Craven B."/>
            <person name="Bowman C."/>
            <person name="Dodson R.J."/>
            <person name="Gwinn M.L."/>
            <person name="Nelson W.C."/>
            <person name="DeBoy R.T."/>
            <person name="Kolonay J.F."/>
            <person name="McClarty G."/>
            <person name="Salzberg S.L."/>
            <person name="Eisen J.A."/>
            <person name="Fraser C.M."/>
        </authorList>
    </citation>
    <scope>NUCLEOTIDE SEQUENCE [LARGE SCALE GENOMIC DNA]</scope>
    <source>
        <strain>MoPn / Nigg</strain>
    </source>
</reference>
<comment type="function">
    <text evidence="1">One of the primary rRNA binding proteins, it binds directly to 16S rRNA where it nucleates assembly of the body of the 30S subunit.</text>
</comment>
<comment type="function">
    <text evidence="1">With S5 and S12 plays an important role in translational accuracy.</text>
</comment>
<comment type="subunit">
    <text evidence="1">Part of the 30S ribosomal subunit. Contacts protein S5. The interaction surface between S4 and S5 is involved in control of translational fidelity.</text>
</comment>
<comment type="similarity">
    <text evidence="1">Belongs to the universal ribosomal protein uS4 family.</text>
</comment>
<accession>Q9PJB7</accession>
<keyword id="KW-0687">Ribonucleoprotein</keyword>
<keyword id="KW-0689">Ribosomal protein</keyword>
<keyword id="KW-0694">RNA-binding</keyword>
<keyword id="KW-0699">rRNA-binding</keyword>
<feature type="chain" id="PRO_0000132362" description="Small ribosomal subunit protein uS4">
    <location>
        <begin position="1"/>
        <end position="209"/>
    </location>
</feature>
<feature type="domain" description="S4 RNA-binding" evidence="1">
    <location>
        <begin position="93"/>
        <end position="154"/>
    </location>
</feature>
<feature type="region of interest" description="Disordered" evidence="2">
    <location>
        <begin position="22"/>
        <end position="45"/>
    </location>
</feature>
<gene>
    <name evidence="1" type="primary">rpsD</name>
    <name type="ordered locus">TC_0915</name>
</gene>
<sequence length="209" mass="23770">MARYCGPKNRIARRFGANIFGRGRNPLLRKPNPPGQHGMQRKKKSDYGLQLEEKQKLKACYGMILEKQLVKAYKEVVHKQGNVAQMFLEKFECRLDNIVYRLGFAKTIFAAQQLVSHGHVLVNGKKVDRRSFFVRPGMQISLKEKSRRLAIVTESLENKDQSSLPAYLSLDKAAFKGELVVSPELDQISSQLPLPVNVSVICEFLSHRT</sequence>
<proteinExistence type="inferred from homology"/>